<organism>
    <name type="scientific">Polaromonas sp. (strain JS666 / ATCC BAA-500)</name>
    <dbReference type="NCBI Taxonomy" id="296591"/>
    <lineage>
        <taxon>Bacteria</taxon>
        <taxon>Pseudomonadati</taxon>
        <taxon>Pseudomonadota</taxon>
        <taxon>Betaproteobacteria</taxon>
        <taxon>Burkholderiales</taxon>
        <taxon>Comamonadaceae</taxon>
        <taxon>Polaromonas</taxon>
    </lineage>
</organism>
<protein>
    <recommendedName>
        <fullName evidence="1">4-diphosphocytidyl-2-C-methyl-D-erythritol kinase</fullName>
        <shortName evidence="1">CMK</shortName>
        <ecNumber evidence="1">2.7.1.148</ecNumber>
    </recommendedName>
    <alternativeName>
        <fullName evidence="1">4-(cytidine-5'-diphospho)-2-C-methyl-D-erythritol kinase</fullName>
    </alternativeName>
</protein>
<gene>
    <name evidence="1" type="primary">ispE</name>
    <name type="ordered locus">Bpro_1294</name>
</gene>
<feature type="chain" id="PRO_0000335739" description="4-diphosphocytidyl-2-C-methyl-D-erythritol kinase">
    <location>
        <begin position="1"/>
        <end position="309"/>
    </location>
</feature>
<feature type="active site" evidence="1">
    <location>
        <position position="28"/>
    </location>
</feature>
<feature type="active site" evidence="1">
    <location>
        <position position="162"/>
    </location>
</feature>
<feature type="binding site" evidence="1">
    <location>
        <begin position="120"/>
        <end position="130"/>
    </location>
    <ligand>
        <name>ATP</name>
        <dbReference type="ChEBI" id="CHEBI:30616"/>
    </ligand>
</feature>
<comment type="function">
    <text evidence="1">Catalyzes the phosphorylation of the position 2 hydroxy group of 4-diphosphocytidyl-2C-methyl-D-erythritol.</text>
</comment>
<comment type="catalytic activity">
    <reaction evidence="1">
        <text>4-CDP-2-C-methyl-D-erythritol + ATP = 4-CDP-2-C-methyl-D-erythritol 2-phosphate + ADP + H(+)</text>
        <dbReference type="Rhea" id="RHEA:18437"/>
        <dbReference type="ChEBI" id="CHEBI:15378"/>
        <dbReference type="ChEBI" id="CHEBI:30616"/>
        <dbReference type="ChEBI" id="CHEBI:57823"/>
        <dbReference type="ChEBI" id="CHEBI:57919"/>
        <dbReference type="ChEBI" id="CHEBI:456216"/>
        <dbReference type="EC" id="2.7.1.148"/>
    </reaction>
</comment>
<comment type="pathway">
    <text evidence="1">Isoprenoid biosynthesis; isopentenyl diphosphate biosynthesis via DXP pathway; isopentenyl diphosphate from 1-deoxy-D-xylulose 5-phosphate: step 3/6.</text>
</comment>
<comment type="similarity">
    <text evidence="1">Belongs to the GHMP kinase family. IspE subfamily.</text>
</comment>
<sequence length="309" mass="32336">MTRTASAPRSVGSARPLKAIYDVPAPAKLNLFLHITGRRADGYHLLQSAFMLIDWCDTLHFELRTDGQISRADLSDPGSPGCGAAEPLPAEDLAVRAARALQAACGTSLGVHIGLEKRIPSQAGMGGGSSDAASCLLALQRLWGVTLPATELRALALSLGADVPFFLSGGHAWVEGIGEKITPIALPAARFVVVKPSAGLSTPAIFSAPELKRDTETATIQGFAANAEGQVFGFGRNDLQPVAQALCPPIGQSLDWLSAQHLQGRMTGSGSAVFALLPHDVDLSDVPGTPGDWKIRKCSNLQAHPLAGW</sequence>
<dbReference type="EC" id="2.7.1.148" evidence="1"/>
<dbReference type="EMBL" id="CP000316">
    <property type="protein sequence ID" value="ABE43244.1"/>
    <property type="molecule type" value="Genomic_DNA"/>
</dbReference>
<dbReference type="RefSeq" id="WP_011482243.1">
    <property type="nucleotide sequence ID" value="NC_007948.1"/>
</dbReference>
<dbReference type="SMR" id="Q12DZ8"/>
<dbReference type="STRING" id="296591.Bpro_1294"/>
<dbReference type="KEGG" id="pol:Bpro_1294"/>
<dbReference type="eggNOG" id="COG1947">
    <property type="taxonomic scope" value="Bacteria"/>
</dbReference>
<dbReference type="HOGENOM" id="CLU_053057_3_0_4"/>
<dbReference type="OrthoDB" id="9809438at2"/>
<dbReference type="UniPathway" id="UPA00056">
    <property type="reaction ID" value="UER00094"/>
</dbReference>
<dbReference type="Proteomes" id="UP000001983">
    <property type="component" value="Chromosome"/>
</dbReference>
<dbReference type="GO" id="GO:0050515">
    <property type="term" value="F:4-(cytidine 5'-diphospho)-2-C-methyl-D-erythritol kinase activity"/>
    <property type="evidence" value="ECO:0007669"/>
    <property type="project" value="UniProtKB-UniRule"/>
</dbReference>
<dbReference type="GO" id="GO:0005524">
    <property type="term" value="F:ATP binding"/>
    <property type="evidence" value="ECO:0007669"/>
    <property type="project" value="UniProtKB-UniRule"/>
</dbReference>
<dbReference type="GO" id="GO:0019288">
    <property type="term" value="P:isopentenyl diphosphate biosynthetic process, methylerythritol 4-phosphate pathway"/>
    <property type="evidence" value="ECO:0007669"/>
    <property type="project" value="UniProtKB-UniRule"/>
</dbReference>
<dbReference type="GO" id="GO:0016114">
    <property type="term" value="P:terpenoid biosynthetic process"/>
    <property type="evidence" value="ECO:0007669"/>
    <property type="project" value="InterPro"/>
</dbReference>
<dbReference type="Gene3D" id="3.30.230.10">
    <property type="match status" value="1"/>
</dbReference>
<dbReference type="Gene3D" id="3.30.70.890">
    <property type="entry name" value="GHMP kinase, C-terminal domain"/>
    <property type="match status" value="1"/>
</dbReference>
<dbReference type="HAMAP" id="MF_00061">
    <property type="entry name" value="IspE"/>
    <property type="match status" value="1"/>
</dbReference>
<dbReference type="InterPro" id="IPR013750">
    <property type="entry name" value="GHMP_kinase_C_dom"/>
</dbReference>
<dbReference type="InterPro" id="IPR036554">
    <property type="entry name" value="GHMP_kinase_C_sf"/>
</dbReference>
<dbReference type="InterPro" id="IPR006204">
    <property type="entry name" value="GHMP_kinase_N_dom"/>
</dbReference>
<dbReference type="InterPro" id="IPR004424">
    <property type="entry name" value="IspE"/>
</dbReference>
<dbReference type="InterPro" id="IPR020568">
    <property type="entry name" value="Ribosomal_Su5_D2-typ_SF"/>
</dbReference>
<dbReference type="InterPro" id="IPR014721">
    <property type="entry name" value="Ribsml_uS5_D2-typ_fold_subgr"/>
</dbReference>
<dbReference type="NCBIfam" id="TIGR00154">
    <property type="entry name" value="ispE"/>
    <property type="match status" value="1"/>
</dbReference>
<dbReference type="PANTHER" id="PTHR43527">
    <property type="entry name" value="4-DIPHOSPHOCYTIDYL-2-C-METHYL-D-ERYTHRITOL KINASE, CHLOROPLASTIC"/>
    <property type="match status" value="1"/>
</dbReference>
<dbReference type="PANTHER" id="PTHR43527:SF2">
    <property type="entry name" value="4-DIPHOSPHOCYTIDYL-2-C-METHYL-D-ERYTHRITOL KINASE, CHLOROPLASTIC"/>
    <property type="match status" value="1"/>
</dbReference>
<dbReference type="Pfam" id="PF08544">
    <property type="entry name" value="GHMP_kinases_C"/>
    <property type="match status" value="1"/>
</dbReference>
<dbReference type="Pfam" id="PF00288">
    <property type="entry name" value="GHMP_kinases_N"/>
    <property type="match status" value="1"/>
</dbReference>
<dbReference type="PIRSF" id="PIRSF010376">
    <property type="entry name" value="IspE"/>
    <property type="match status" value="1"/>
</dbReference>
<dbReference type="SUPFAM" id="SSF55060">
    <property type="entry name" value="GHMP Kinase, C-terminal domain"/>
    <property type="match status" value="1"/>
</dbReference>
<dbReference type="SUPFAM" id="SSF54211">
    <property type="entry name" value="Ribosomal protein S5 domain 2-like"/>
    <property type="match status" value="1"/>
</dbReference>
<evidence type="ECO:0000255" key="1">
    <source>
        <dbReference type="HAMAP-Rule" id="MF_00061"/>
    </source>
</evidence>
<accession>Q12DZ8</accession>
<name>ISPE_POLSJ</name>
<keyword id="KW-0067">ATP-binding</keyword>
<keyword id="KW-0414">Isoprene biosynthesis</keyword>
<keyword id="KW-0418">Kinase</keyword>
<keyword id="KW-0547">Nucleotide-binding</keyword>
<keyword id="KW-1185">Reference proteome</keyword>
<keyword id="KW-0808">Transferase</keyword>
<reference key="1">
    <citation type="journal article" date="2008" name="Appl. Environ. Microbiol.">
        <title>The genome of Polaromonas sp. strain JS666: insights into the evolution of a hydrocarbon- and xenobiotic-degrading bacterium, and features of relevance to biotechnology.</title>
        <authorList>
            <person name="Mattes T.E."/>
            <person name="Alexander A.K."/>
            <person name="Richardson P.M."/>
            <person name="Munk A.C."/>
            <person name="Han C.S."/>
            <person name="Stothard P."/>
            <person name="Coleman N.V."/>
        </authorList>
    </citation>
    <scope>NUCLEOTIDE SEQUENCE [LARGE SCALE GENOMIC DNA]</scope>
    <source>
        <strain>JS666 / ATCC BAA-500</strain>
    </source>
</reference>
<proteinExistence type="inferred from homology"/>